<sequence length="1357" mass="150752">MAYSYTEKKRIRKDFSKLPDVMDVPYLLAIQLDSYREFLQQGVSKEQFRDIGLHAAFKSVFPIISYSGNAALEYVGYRLGEPAFDVKECVLRGVTFAVPLRVKVRLIIFDKESSNKAIKDIKEQEVYMGEIPLMTENGTFVINGTERVIVSQLHRSPGVFFDHDRGKTHSSGKLLYSARIIPYRGSWLDFEFDPKDAVFVRIDRRRKLPASVLLRALGYSTEEVLDAFYDTNVFHVKNESLSLELVPQRLRGEVAVLDIKDASGKVIVEQGRRITARHINQLDKAGIKELEVPLDYVIGRTTAKAIVHPATGEIIAECNTELTADLLAKMAKANVVRFETLYTNDIDCGPFISDTLKIDSTTNQLEALVEIYRMMRPGEPPTKDAAETLFNNLFFSAERYDLSAVGRMKFNRRIGRTEIEGSGVLSKEDIVAVLKTLVDIRNGKGIVDDIDHLGNRRVRCVGEMAENQFRVGLVRVERAVKERLSMAESEGLMPQDLINAKPVAAAVKEFFGSSQLSQFMDQNNPLSEITHKRRVSALGPGGLTRERAGFEVRDVHPTHYGRVCPIETPEGPNIGLINSLAAYARTNQYGFLESPYRVVKEGKVTDEIVFLSAIEEADHVIAQASATLNDKGELVDELVAVRHLNEFTVKAPEDVTLMDVSPKQVVSVAASLIPFLEHDDANRALMGSNMQRQAVPTLRADKPLVGTGMERNVARDSGVCVVARRGGVIDSVDASRIVVRVNDDEVETGEAGVDIYNLTKYTRSNQNTCINQRPLVSKGDQVARGDIMADGPSTDMGELALGQNMRVAFMPWNGFNFEDSICLSERVVQEDRFTTIHIQELTCVARDTKLGPEEISSDIPNVGEAALNKLDEAGIVYVGAEVGPGDILVGKVTPKGETQLTPEEKLLRAIFGEKASDVKDTSLRVPTGTKGTVIDVQVFTRDGVERDSRALAIEKQQLDEIRKDLNEEFRIVEGATFERLRSALVGAIAEGGAGLKKGTAITDEFLDGLERGQWFKLRMADDALNEQLEKAQAYISDRRQMLDDKFEDKKRKLQQGDDLAPGVLKIVKVYLAIRRRIQPGDKMAGRHGNKGVVSVIMPVEDMPHDANGTPVDIVLNPLGVPSRMNVGQILETHLGLAAKGLGEKINRMLEEQRKVAELRKFLAEIYNEIGGRQENLDEFSDNEILELAKNLKGGVPMATAVFDGAKETEIKAMLKLADLPESGQMRLFDGRTGNQFERPTTVGYMYMLKLNHLVDDKMHARSTGSYSLVTQQPLGGKAQFGGQRFGEMEVWALEAYGAAYTLQEMLTVKSDDVNGRTKMYKNIVDGDHRMEPGMPESFNVLIKEIRSLGIDIDLETE</sequence>
<dbReference type="EC" id="2.7.7.6" evidence="1"/>
<dbReference type="EMBL" id="CP000680">
    <property type="protein sequence ID" value="ABP86663.1"/>
    <property type="molecule type" value="Genomic_DNA"/>
</dbReference>
<dbReference type="SMR" id="A4XZ97"/>
<dbReference type="STRING" id="399739.Pmen_3916"/>
<dbReference type="KEGG" id="pmy:Pmen_3916"/>
<dbReference type="PATRIC" id="fig|399739.8.peg.3969"/>
<dbReference type="eggNOG" id="COG0085">
    <property type="taxonomic scope" value="Bacteria"/>
</dbReference>
<dbReference type="HOGENOM" id="CLU_000524_4_0_6"/>
<dbReference type="OrthoDB" id="9803954at2"/>
<dbReference type="GO" id="GO:0000428">
    <property type="term" value="C:DNA-directed RNA polymerase complex"/>
    <property type="evidence" value="ECO:0007669"/>
    <property type="project" value="UniProtKB-KW"/>
</dbReference>
<dbReference type="GO" id="GO:0003677">
    <property type="term" value="F:DNA binding"/>
    <property type="evidence" value="ECO:0007669"/>
    <property type="project" value="UniProtKB-UniRule"/>
</dbReference>
<dbReference type="GO" id="GO:0003899">
    <property type="term" value="F:DNA-directed RNA polymerase activity"/>
    <property type="evidence" value="ECO:0007669"/>
    <property type="project" value="UniProtKB-UniRule"/>
</dbReference>
<dbReference type="GO" id="GO:0032549">
    <property type="term" value="F:ribonucleoside binding"/>
    <property type="evidence" value="ECO:0007669"/>
    <property type="project" value="InterPro"/>
</dbReference>
<dbReference type="GO" id="GO:0006351">
    <property type="term" value="P:DNA-templated transcription"/>
    <property type="evidence" value="ECO:0007669"/>
    <property type="project" value="UniProtKB-UniRule"/>
</dbReference>
<dbReference type="CDD" id="cd00653">
    <property type="entry name" value="RNA_pol_B_RPB2"/>
    <property type="match status" value="1"/>
</dbReference>
<dbReference type="FunFam" id="2.40.50.100:FF:000006">
    <property type="entry name" value="DNA-directed RNA polymerase subunit beta"/>
    <property type="match status" value="1"/>
</dbReference>
<dbReference type="FunFam" id="2.40.50.150:FF:000001">
    <property type="entry name" value="DNA-directed RNA polymerase subunit beta"/>
    <property type="match status" value="1"/>
</dbReference>
<dbReference type="FunFam" id="3.90.1110.10:FF:000001">
    <property type="entry name" value="DNA-directed RNA polymerase subunit beta"/>
    <property type="match status" value="1"/>
</dbReference>
<dbReference type="FunFam" id="3.90.1110.10:FF:000004">
    <property type="entry name" value="DNA-directed RNA polymerase subunit beta"/>
    <property type="match status" value="1"/>
</dbReference>
<dbReference type="FunFam" id="3.90.1800.10:FF:000001">
    <property type="entry name" value="DNA-directed RNA polymerase subunit beta"/>
    <property type="match status" value="1"/>
</dbReference>
<dbReference type="Gene3D" id="2.40.50.100">
    <property type="match status" value="1"/>
</dbReference>
<dbReference type="Gene3D" id="2.40.50.150">
    <property type="match status" value="1"/>
</dbReference>
<dbReference type="Gene3D" id="3.90.1100.10">
    <property type="match status" value="2"/>
</dbReference>
<dbReference type="Gene3D" id="6.10.140.1670">
    <property type="match status" value="1"/>
</dbReference>
<dbReference type="Gene3D" id="2.30.150.10">
    <property type="entry name" value="DNA-directed RNA polymerase, beta subunit, external 1 domain"/>
    <property type="match status" value="1"/>
</dbReference>
<dbReference type="Gene3D" id="2.40.270.10">
    <property type="entry name" value="DNA-directed RNA polymerase, subunit 2, domain 6"/>
    <property type="match status" value="1"/>
</dbReference>
<dbReference type="Gene3D" id="3.90.1800.10">
    <property type="entry name" value="RNA polymerase alpha subunit dimerisation domain"/>
    <property type="match status" value="1"/>
</dbReference>
<dbReference type="Gene3D" id="3.90.1110.10">
    <property type="entry name" value="RNA polymerase Rpb2, domain 2"/>
    <property type="match status" value="1"/>
</dbReference>
<dbReference type="HAMAP" id="MF_01321">
    <property type="entry name" value="RNApol_bact_RpoB"/>
    <property type="match status" value="1"/>
</dbReference>
<dbReference type="InterPro" id="IPR042107">
    <property type="entry name" value="DNA-dir_RNA_pol_bsu_ext_1_sf"/>
</dbReference>
<dbReference type="InterPro" id="IPR019462">
    <property type="entry name" value="DNA-dir_RNA_pol_bsu_external_1"/>
</dbReference>
<dbReference type="InterPro" id="IPR015712">
    <property type="entry name" value="DNA-dir_RNA_pol_su2"/>
</dbReference>
<dbReference type="InterPro" id="IPR007120">
    <property type="entry name" value="DNA-dir_RNAP_su2_dom"/>
</dbReference>
<dbReference type="InterPro" id="IPR037033">
    <property type="entry name" value="DNA-dir_RNAP_su2_hyb_sf"/>
</dbReference>
<dbReference type="InterPro" id="IPR010243">
    <property type="entry name" value="RNA_pol_bsu_bac"/>
</dbReference>
<dbReference type="InterPro" id="IPR007121">
    <property type="entry name" value="RNA_pol_bsu_CS"/>
</dbReference>
<dbReference type="InterPro" id="IPR007644">
    <property type="entry name" value="RNA_pol_bsu_protrusion"/>
</dbReference>
<dbReference type="InterPro" id="IPR007642">
    <property type="entry name" value="RNA_pol_Rpb2_2"/>
</dbReference>
<dbReference type="InterPro" id="IPR037034">
    <property type="entry name" value="RNA_pol_Rpb2_2_sf"/>
</dbReference>
<dbReference type="InterPro" id="IPR007645">
    <property type="entry name" value="RNA_pol_Rpb2_3"/>
</dbReference>
<dbReference type="InterPro" id="IPR007641">
    <property type="entry name" value="RNA_pol_Rpb2_7"/>
</dbReference>
<dbReference type="InterPro" id="IPR014724">
    <property type="entry name" value="RNA_pol_RPB2_OB-fold"/>
</dbReference>
<dbReference type="NCBIfam" id="NF001616">
    <property type="entry name" value="PRK00405.1"/>
    <property type="match status" value="1"/>
</dbReference>
<dbReference type="NCBIfam" id="TIGR02013">
    <property type="entry name" value="rpoB"/>
    <property type="match status" value="1"/>
</dbReference>
<dbReference type="PANTHER" id="PTHR20856">
    <property type="entry name" value="DNA-DIRECTED RNA POLYMERASE I SUBUNIT 2"/>
    <property type="match status" value="1"/>
</dbReference>
<dbReference type="Pfam" id="PF04563">
    <property type="entry name" value="RNA_pol_Rpb2_1"/>
    <property type="match status" value="1"/>
</dbReference>
<dbReference type="Pfam" id="PF04561">
    <property type="entry name" value="RNA_pol_Rpb2_2"/>
    <property type="match status" value="2"/>
</dbReference>
<dbReference type="Pfam" id="PF04565">
    <property type="entry name" value="RNA_pol_Rpb2_3"/>
    <property type="match status" value="1"/>
</dbReference>
<dbReference type="Pfam" id="PF10385">
    <property type="entry name" value="RNA_pol_Rpb2_45"/>
    <property type="match status" value="1"/>
</dbReference>
<dbReference type="Pfam" id="PF00562">
    <property type="entry name" value="RNA_pol_Rpb2_6"/>
    <property type="match status" value="1"/>
</dbReference>
<dbReference type="Pfam" id="PF04560">
    <property type="entry name" value="RNA_pol_Rpb2_7"/>
    <property type="match status" value="1"/>
</dbReference>
<dbReference type="SUPFAM" id="SSF64484">
    <property type="entry name" value="beta and beta-prime subunits of DNA dependent RNA-polymerase"/>
    <property type="match status" value="1"/>
</dbReference>
<dbReference type="PROSITE" id="PS01166">
    <property type="entry name" value="RNA_POL_BETA"/>
    <property type="match status" value="1"/>
</dbReference>
<protein>
    <recommendedName>
        <fullName evidence="1">DNA-directed RNA polymerase subunit beta</fullName>
        <shortName evidence="1">RNAP subunit beta</shortName>
        <ecNumber evidence="1">2.7.7.6</ecNumber>
    </recommendedName>
    <alternativeName>
        <fullName evidence="1">RNA polymerase subunit beta</fullName>
    </alternativeName>
    <alternativeName>
        <fullName evidence="1">Transcriptase subunit beta</fullName>
    </alternativeName>
</protein>
<comment type="function">
    <text evidence="1">DNA-dependent RNA polymerase catalyzes the transcription of DNA into RNA using the four ribonucleoside triphosphates as substrates.</text>
</comment>
<comment type="catalytic activity">
    <reaction evidence="1">
        <text>RNA(n) + a ribonucleoside 5'-triphosphate = RNA(n+1) + diphosphate</text>
        <dbReference type="Rhea" id="RHEA:21248"/>
        <dbReference type="Rhea" id="RHEA-COMP:14527"/>
        <dbReference type="Rhea" id="RHEA-COMP:17342"/>
        <dbReference type="ChEBI" id="CHEBI:33019"/>
        <dbReference type="ChEBI" id="CHEBI:61557"/>
        <dbReference type="ChEBI" id="CHEBI:140395"/>
        <dbReference type="EC" id="2.7.7.6"/>
    </reaction>
</comment>
<comment type="subunit">
    <text evidence="1">The RNAP catalytic core consists of 2 alpha, 1 beta, 1 beta' and 1 omega subunit. When a sigma factor is associated with the core the holoenzyme is formed, which can initiate transcription.</text>
</comment>
<comment type="similarity">
    <text evidence="1">Belongs to the RNA polymerase beta chain family.</text>
</comment>
<gene>
    <name evidence="1" type="primary">rpoB</name>
    <name type="ordered locus">Pmen_3916</name>
</gene>
<proteinExistence type="inferred from homology"/>
<reference key="1">
    <citation type="submission" date="2007-04" db="EMBL/GenBank/DDBJ databases">
        <title>Complete sequence of Pseudomonas mendocina ymp.</title>
        <authorList>
            <consortium name="US DOE Joint Genome Institute"/>
            <person name="Copeland A."/>
            <person name="Lucas S."/>
            <person name="Lapidus A."/>
            <person name="Barry K."/>
            <person name="Glavina del Rio T."/>
            <person name="Dalin E."/>
            <person name="Tice H."/>
            <person name="Pitluck S."/>
            <person name="Kiss H."/>
            <person name="Brettin T."/>
            <person name="Detter J.C."/>
            <person name="Bruce D."/>
            <person name="Han C."/>
            <person name="Schmutz J."/>
            <person name="Larimer F."/>
            <person name="Land M."/>
            <person name="Hauser L."/>
            <person name="Kyrpides N."/>
            <person name="Mikhailova N."/>
            <person name="Hersman L."/>
            <person name="Dubois J."/>
            <person name="Maurice P."/>
            <person name="Richardson P."/>
        </authorList>
    </citation>
    <scope>NUCLEOTIDE SEQUENCE [LARGE SCALE GENOMIC DNA]</scope>
    <source>
        <strain>ymp</strain>
    </source>
</reference>
<name>RPOB_ECTM1</name>
<organism>
    <name type="scientific">Ectopseudomonas mendocina (strain ymp)</name>
    <name type="common">Pseudomonas mendocina</name>
    <dbReference type="NCBI Taxonomy" id="399739"/>
    <lineage>
        <taxon>Bacteria</taxon>
        <taxon>Pseudomonadati</taxon>
        <taxon>Pseudomonadota</taxon>
        <taxon>Gammaproteobacteria</taxon>
        <taxon>Pseudomonadales</taxon>
        <taxon>Pseudomonadaceae</taxon>
        <taxon>Ectopseudomonas</taxon>
    </lineage>
</organism>
<accession>A4XZ97</accession>
<keyword id="KW-0240">DNA-directed RNA polymerase</keyword>
<keyword id="KW-0548">Nucleotidyltransferase</keyword>
<keyword id="KW-0804">Transcription</keyword>
<keyword id="KW-0808">Transferase</keyword>
<evidence type="ECO:0000255" key="1">
    <source>
        <dbReference type="HAMAP-Rule" id="MF_01321"/>
    </source>
</evidence>
<feature type="chain" id="PRO_1000051974" description="DNA-directed RNA polymerase subunit beta">
    <location>
        <begin position="1"/>
        <end position="1357"/>
    </location>
</feature>